<evidence type="ECO:0000255" key="1">
    <source>
        <dbReference type="HAMAP-Rule" id="MF_00758"/>
    </source>
</evidence>
<keyword id="KW-1185">Reference proteome</keyword>
<reference key="1">
    <citation type="journal article" date="2005" name="Nucleic Acids Res.">
        <title>Genomic blueprint of Hahella chejuensis, a marine microbe producing an algicidal agent.</title>
        <authorList>
            <person name="Jeong H."/>
            <person name="Yim J.H."/>
            <person name="Lee C."/>
            <person name="Choi S.-H."/>
            <person name="Park Y.K."/>
            <person name="Yoon S.H."/>
            <person name="Hur C.-G."/>
            <person name="Kang H.-Y."/>
            <person name="Kim D."/>
            <person name="Lee H.H."/>
            <person name="Park K.H."/>
            <person name="Park S.-H."/>
            <person name="Park H.-S."/>
            <person name="Lee H.K."/>
            <person name="Oh T.K."/>
            <person name="Kim J.F."/>
        </authorList>
    </citation>
    <scope>NUCLEOTIDE SEQUENCE [LARGE SCALE GENOMIC DNA]</scope>
    <source>
        <strain>KCTC 2396</strain>
    </source>
</reference>
<feature type="chain" id="PRO_0000258831" description="UPF0301 protein HCH_00550">
    <location>
        <begin position="1"/>
        <end position="185"/>
    </location>
</feature>
<sequence length="185" mass="19973">MSSSMSTLRNQFLIAMPHLKDPNFEGTISYICDHNDEGAMGIVINRPLDIRLSDMLAQLELGGEGIAMPVYSGGPVQIERGFVLHSPLGDWQSSIEIAPDICITTSKDILEAMARGVGPDRTLVALGYAGWGAGQLEKEISNNFWITCPADSAIIFRTPDSEKVVSALGRVGIDYHRLSSISGHA</sequence>
<accession>Q2SPH0</accession>
<name>Y550_HAHCH</name>
<comment type="similarity">
    <text evidence="1">Belongs to the UPF0301 (AlgH) family.</text>
</comment>
<dbReference type="EMBL" id="CP000155">
    <property type="protein sequence ID" value="ABC27454.1"/>
    <property type="molecule type" value="Genomic_DNA"/>
</dbReference>
<dbReference type="RefSeq" id="WP_011394531.1">
    <property type="nucleotide sequence ID" value="NC_007645.1"/>
</dbReference>
<dbReference type="SMR" id="Q2SPH0"/>
<dbReference type="STRING" id="349521.HCH_00550"/>
<dbReference type="KEGG" id="hch:HCH_00550"/>
<dbReference type="eggNOG" id="COG1678">
    <property type="taxonomic scope" value="Bacteria"/>
</dbReference>
<dbReference type="HOGENOM" id="CLU_057596_1_0_6"/>
<dbReference type="OrthoDB" id="9807486at2"/>
<dbReference type="Proteomes" id="UP000000238">
    <property type="component" value="Chromosome"/>
</dbReference>
<dbReference type="GO" id="GO:0005829">
    <property type="term" value="C:cytosol"/>
    <property type="evidence" value="ECO:0007669"/>
    <property type="project" value="TreeGrafter"/>
</dbReference>
<dbReference type="Gene3D" id="3.40.1740.10">
    <property type="entry name" value="VC0467-like"/>
    <property type="match status" value="1"/>
</dbReference>
<dbReference type="HAMAP" id="MF_00758">
    <property type="entry name" value="UPF0301"/>
    <property type="match status" value="1"/>
</dbReference>
<dbReference type="InterPro" id="IPR003774">
    <property type="entry name" value="AlgH-like"/>
</dbReference>
<dbReference type="NCBIfam" id="NF001266">
    <property type="entry name" value="PRK00228.1-1"/>
    <property type="match status" value="1"/>
</dbReference>
<dbReference type="PANTHER" id="PTHR30327">
    <property type="entry name" value="UNCHARACTERIZED PROTEIN YQGE"/>
    <property type="match status" value="1"/>
</dbReference>
<dbReference type="PANTHER" id="PTHR30327:SF1">
    <property type="entry name" value="UPF0301 PROTEIN YQGE"/>
    <property type="match status" value="1"/>
</dbReference>
<dbReference type="Pfam" id="PF02622">
    <property type="entry name" value="DUF179"/>
    <property type="match status" value="1"/>
</dbReference>
<dbReference type="SUPFAM" id="SSF143456">
    <property type="entry name" value="VC0467-like"/>
    <property type="match status" value="1"/>
</dbReference>
<proteinExistence type="inferred from homology"/>
<protein>
    <recommendedName>
        <fullName evidence="1">UPF0301 protein HCH_00550</fullName>
    </recommendedName>
</protein>
<gene>
    <name type="ordered locus">HCH_00550</name>
</gene>
<organism>
    <name type="scientific">Hahella chejuensis (strain KCTC 2396)</name>
    <dbReference type="NCBI Taxonomy" id="349521"/>
    <lineage>
        <taxon>Bacteria</taxon>
        <taxon>Pseudomonadati</taxon>
        <taxon>Pseudomonadota</taxon>
        <taxon>Gammaproteobacteria</taxon>
        <taxon>Oceanospirillales</taxon>
        <taxon>Hahellaceae</taxon>
        <taxon>Hahella</taxon>
    </lineage>
</organism>